<comment type="function">
    <text evidence="1">Inhibits the expression or activity of extracellular murein hydrolases by interacting, possibly with LrgA, with the holin-like proteins CidA and/or CidB. The LrgAB and CidAB proteins may affect the proton motive force of the membrane. May be involved in programmed cell death (PCD), possibly triggering PCD in response to antibiotics and environmental stresses.</text>
</comment>
<comment type="subcellular location">
    <subcellularLocation>
        <location evidence="1">Cell membrane</location>
        <topology evidence="1">Multi-pass membrane protein</topology>
    </subcellularLocation>
</comment>
<comment type="similarity">
    <text evidence="1">Belongs to the CidB/LrgB family. LrgB subfamily.</text>
</comment>
<sequence>MINHLALNTPYFGILLSVIPFFLATILFEKTNRFFLFAPLFVSMVFGVAFLYLTGIPYKTYKIGGDIIYFFLEPATICFAIPLYKKREVLVKHWHRIIGGIGIGTVVALLIILTFAKLAQFANDVILSMLPQAATTAIALPVSAGIGGIKELTSLAVILNGVIIYALGNKFLKLFRITNPIARGLALGTSGHTLGVAPAKELGPVEESMASIALVLVGVVVVAVVPVFVAIFF</sequence>
<keyword id="KW-1003">Cell membrane</keyword>
<keyword id="KW-0204">Cytolysis</keyword>
<keyword id="KW-0472">Membrane</keyword>
<keyword id="KW-0812">Transmembrane</keyword>
<keyword id="KW-1133">Transmembrane helix</keyword>
<feature type="chain" id="PRO_1000065442" description="Antiholin-like protein LrgB">
    <location>
        <begin position="1"/>
        <end position="233"/>
    </location>
</feature>
<feature type="transmembrane region" description="Helical" evidence="1">
    <location>
        <begin position="9"/>
        <end position="29"/>
    </location>
</feature>
<feature type="transmembrane region" description="Helical" evidence="1">
    <location>
        <begin position="34"/>
        <end position="54"/>
    </location>
</feature>
<feature type="transmembrane region" description="Helical" evidence="1">
    <location>
        <begin position="63"/>
        <end position="83"/>
    </location>
</feature>
<feature type="transmembrane region" description="Helical" evidence="1">
    <location>
        <begin position="97"/>
        <end position="117"/>
    </location>
</feature>
<feature type="transmembrane region" description="Helical" evidence="1">
    <location>
        <begin position="121"/>
        <end position="141"/>
    </location>
</feature>
<feature type="transmembrane region" description="Helical" evidence="1">
    <location>
        <begin position="144"/>
        <end position="164"/>
    </location>
</feature>
<feature type="transmembrane region" description="Helical" evidence="1">
    <location>
        <begin position="212"/>
        <end position="232"/>
    </location>
</feature>
<organism>
    <name type="scientific">Staphylococcus aureus (strain Mu3 / ATCC 700698)</name>
    <dbReference type="NCBI Taxonomy" id="418127"/>
    <lineage>
        <taxon>Bacteria</taxon>
        <taxon>Bacillati</taxon>
        <taxon>Bacillota</taxon>
        <taxon>Bacilli</taxon>
        <taxon>Bacillales</taxon>
        <taxon>Staphylococcaceae</taxon>
        <taxon>Staphylococcus</taxon>
    </lineage>
</organism>
<proteinExistence type="inferred from homology"/>
<dbReference type="EMBL" id="AP009324">
    <property type="protein sequence ID" value="BAF77145.1"/>
    <property type="molecule type" value="Genomic_DNA"/>
</dbReference>
<dbReference type="RefSeq" id="WP_000607067.1">
    <property type="nucleotide sequence ID" value="NZ_CTYB01000070.1"/>
</dbReference>
<dbReference type="KEGG" id="saw:SAHV_0262"/>
<dbReference type="HOGENOM" id="CLU_082099_1_0_9"/>
<dbReference type="GO" id="GO:0005886">
    <property type="term" value="C:plasma membrane"/>
    <property type="evidence" value="ECO:0007669"/>
    <property type="project" value="UniProtKB-SubCell"/>
</dbReference>
<dbReference type="GO" id="GO:0019835">
    <property type="term" value="P:cytolysis"/>
    <property type="evidence" value="ECO:0007669"/>
    <property type="project" value="UniProtKB-UniRule"/>
</dbReference>
<dbReference type="GO" id="GO:0031640">
    <property type="term" value="P:killing of cells of another organism"/>
    <property type="evidence" value="ECO:0007669"/>
    <property type="project" value="UniProtKB-KW"/>
</dbReference>
<dbReference type="GO" id="GO:0012501">
    <property type="term" value="P:programmed cell death"/>
    <property type="evidence" value="ECO:0007669"/>
    <property type="project" value="UniProtKB-UniRule"/>
</dbReference>
<dbReference type="HAMAP" id="MF_01142">
    <property type="entry name" value="LrgB"/>
    <property type="match status" value="1"/>
</dbReference>
<dbReference type="InterPro" id="IPR024891">
    <property type="entry name" value="Antiholin-like_LrgB"/>
</dbReference>
<dbReference type="InterPro" id="IPR007300">
    <property type="entry name" value="CidB/LrgB"/>
</dbReference>
<dbReference type="NCBIfam" id="NF003291">
    <property type="entry name" value="PRK04288.1"/>
    <property type="match status" value="1"/>
</dbReference>
<dbReference type="PANTHER" id="PTHR30249:SF0">
    <property type="entry name" value="PLASTIDAL GLYCOLATE_GLYCERATE TRANSLOCATOR 1, CHLOROPLASTIC"/>
    <property type="match status" value="1"/>
</dbReference>
<dbReference type="PANTHER" id="PTHR30249">
    <property type="entry name" value="PUTATIVE SEROTONIN TRANSPORTER"/>
    <property type="match status" value="1"/>
</dbReference>
<dbReference type="Pfam" id="PF04172">
    <property type="entry name" value="LrgB"/>
    <property type="match status" value="1"/>
</dbReference>
<name>LRGB_STAA1</name>
<evidence type="ECO:0000255" key="1">
    <source>
        <dbReference type="HAMAP-Rule" id="MF_01142"/>
    </source>
</evidence>
<accession>A7WXS7</accession>
<reference key="1">
    <citation type="journal article" date="2008" name="Antimicrob. Agents Chemother.">
        <title>Mutated response regulator graR is responsible for phenotypic conversion of Staphylococcus aureus from heterogeneous vancomycin-intermediate resistance to vancomycin-intermediate resistance.</title>
        <authorList>
            <person name="Neoh H.-M."/>
            <person name="Cui L."/>
            <person name="Yuzawa H."/>
            <person name="Takeuchi F."/>
            <person name="Matsuo M."/>
            <person name="Hiramatsu K."/>
        </authorList>
    </citation>
    <scope>NUCLEOTIDE SEQUENCE [LARGE SCALE GENOMIC DNA]</scope>
    <source>
        <strain>Mu3 / ATCC 700698</strain>
    </source>
</reference>
<gene>
    <name evidence="1" type="primary">lrgB</name>
    <name type="ordered locus">SAHV_0262</name>
</gene>
<protein>
    <recommendedName>
        <fullName evidence="1">Antiholin-like protein LrgB</fullName>
    </recommendedName>
</protein>